<protein>
    <recommendedName>
        <fullName>Putative cyclic nucleotide-gated ion channel 15</fullName>
    </recommendedName>
    <alternativeName>
        <fullName>Cyclic nucleotide- and calmodulin-regulated ion channel 15</fullName>
    </alternativeName>
</protein>
<feature type="chain" id="PRO_0000219343" description="Putative cyclic nucleotide-gated ion channel 15">
    <location>
        <begin position="1"/>
        <end position="678"/>
    </location>
</feature>
<feature type="topological domain" description="Cytoplasmic" evidence="2">
    <location>
        <begin position="1"/>
        <end position="81"/>
    </location>
</feature>
<feature type="transmembrane region" description="Helical; Name=H1" evidence="2">
    <location>
        <begin position="82"/>
        <end position="102"/>
    </location>
</feature>
<feature type="topological domain" description="Extracellular" evidence="2">
    <location>
        <begin position="103"/>
        <end position="115"/>
    </location>
</feature>
<feature type="transmembrane region" description="Helical; Name=H2" evidence="2">
    <location>
        <begin position="116"/>
        <end position="136"/>
    </location>
</feature>
<feature type="topological domain" description="Cytoplasmic" evidence="2">
    <location>
        <begin position="137"/>
        <end position="170"/>
    </location>
</feature>
<feature type="transmembrane region" description="Helical; Name=H3" evidence="2">
    <location>
        <begin position="171"/>
        <end position="191"/>
    </location>
</feature>
<feature type="topological domain" description="Extracellular" evidence="2">
    <location>
        <begin position="192"/>
        <end position="203"/>
    </location>
</feature>
<feature type="transmembrane region" description="Helical; Name=H4" evidence="2">
    <location>
        <begin position="204"/>
        <end position="224"/>
    </location>
</feature>
<feature type="topological domain" description="Cytoplasmic" evidence="2">
    <location>
        <begin position="225"/>
        <end position="245"/>
    </location>
</feature>
<feature type="transmembrane region" description="Helical; Name=H5" evidence="2">
    <location>
        <begin position="246"/>
        <end position="266"/>
    </location>
</feature>
<feature type="topological domain" description="Extracellular" evidence="2">
    <location>
        <begin position="267"/>
        <end position="364"/>
    </location>
</feature>
<feature type="transmembrane region" description="Helical; Name=H6" evidence="2">
    <location>
        <begin position="365"/>
        <end position="385"/>
    </location>
</feature>
<feature type="topological domain" description="Cytoplasmic" evidence="2">
    <location>
        <begin position="386"/>
        <end position="678"/>
    </location>
</feature>
<feature type="domain" description="IQ" evidence="3">
    <location>
        <begin position="607"/>
        <end position="638"/>
    </location>
</feature>
<feature type="region of interest" description="Calmodulin-binding" evidence="1">
    <location>
        <begin position="587"/>
        <end position="602"/>
    </location>
</feature>
<feature type="region of interest" description="Disordered" evidence="4">
    <location>
        <begin position="656"/>
        <end position="678"/>
    </location>
</feature>
<feature type="compositionally biased region" description="Polar residues" evidence="4">
    <location>
        <begin position="656"/>
        <end position="668"/>
    </location>
</feature>
<feature type="binding site">
    <location>
        <begin position="471"/>
        <end position="595"/>
    </location>
    <ligand>
        <name>a nucleoside 3',5'-cyclic phosphate</name>
        <dbReference type="ChEBI" id="CHEBI:58464"/>
    </ligand>
</feature>
<feature type="binding site" evidence="1">
    <location>
        <position position="542"/>
    </location>
    <ligand>
        <name>a nucleoside 3',5'-cyclic phosphate</name>
        <dbReference type="ChEBI" id="CHEBI:58464"/>
    </ligand>
</feature>
<organism>
    <name type="scientific">Arabidopsis thaliana</name>
    <name type="common">Mouse-ear cress</name>
    <dbReference type="NCBI Taxonomy" id="3702"/>
    <lineage>
        <taxon>Eukaryota</taxon>
        <taxon>Viridiplantae</taxon>
        <taxon>Streptophyta</taxon>
        <taxon>Embryophyta</taxon>
        <taxon>Tracheophyta</taxon>
        <taxon>Spermatophyta</taxon>
        <taxon>Magnoliopsida</taxon>
        <taxon>eudicotyledons</taxon>
        <taxon>Gunneridae</taxon>
        <taxon>Pentapetalae</taxon>
        <taxon>rosids</taxon>
        <taxon>malvids</taxon>
        <taxon>Brassicales</taxon>
        <taxon>Brassicaceae</taxon>
        <taxon>Camelineae</taxon>
        <taxon>Arabidopsis</taxon>
    </lineage>
</organism>
<dbReference type="EMBL" id="AC006202">
    <property type="protein sequence ID" value="AAD29827.1"/>
    <property type="molecule type" value="Genomic_DNA"/>
</dbReference>
<dbReference type="EMBL" id="CP002685">
    <property type="protein sequence ID" value="AEC08097.1"/>
    <property type="molecule type" value="Genomic_DNA"/>
</dbReference>
<dbReference type="PIR" id="G84682">
    <property type="entry name" value="G84682"/>
</dbReference>
<dbReference type="RefSeq" id="NP_180393.1">
    <property type="nucleotide sequence ID" value="NM_128386.2"/>
</dbReference>
<dbReference type="FunCoup" id="Q9SL29">
    <property type="interactions" value="206"/>
</dbReference>
<dbReference type="STRING" id="3702.Q9SL29"/>
<dbReference type="TCDB" id="1.A.1.5.27">
    <property type="family name" value="the voltage-gated ion channel (vic) superfamily"/>
</dbReference>
<dbReference type="iPTMnet" id="Q9SL29"/>
<dbReference type="PaxDb" id="3702-AT2G28260.1"/>
<dbReference type="EnsemblPlants" id="AT2G28260.1">
    <property type="protein sequence ID" value="AT2G28260.1"/>
    <property type="gene ID" value="AT2G28260"/>
</dbReference>
<dbReference type="GeneID" id="817372"/>
<dbReference type="Gramene" id="AT2G28260.1">
    <property type="protein sequence ID" value="AT2G28260.1"/>
    <property type="gene ID" value="AT2G28260"/>
</dbReference>
<dbReference type="KEGG" id="ath:AT2G28260"/>
<dbReference type="Araport" id="AT2G28260"/>
<dbReference type="TAIR" id="AT2G28260">
    <property type="gene designation" value="CNGC15"/>
</dbReference>
<dbReference type="eggNOG" id="KOG0498">
    <property type="taxonomic scope" value="Eukaryota"/>
</dbReference>
<dbReference type="HOGENOM" id="CLU_013069_3_0_1"/>
<dbReference type="InParanoid" id="Q9SL29"/>
<dbReference type="OrthoDB" id="421226at2759"/>
<dbReference type="PhylomeDB" id="Q9SL29"/>
<dbReference type="PRO" id="PR:Q9SL29"/>
<dbReference type="Proteomes" id="UP000006548">
    <property type="component" value="Chromosome 2"/>
</dbReference>
<dbReference type="ExpressionAtlas" id="Q9SL29">
    <property type="expression patterns" value="baseline and differential"/>
</dbReference>
<dbReference type="GO" id="GO:0005886">
    <property type="term" value="C:plasma membrane"/>
    <property type="evidence" value="ECO:0007669"/>
    <property type="project" value="UniProtKB-SubCell"/>
</dbReference>
<dbReference type="GO" id="GO:0005516">
    <property type="term" value="F:calmodulin binding"/>
    <property type="evidence" value="ECO:0007669"/>
    <property type="project" value="UniProtKB-KW"/>
</dbReference>
<dbReference type="GO" id="GO:0030552">
    <property type="term" value="F:cAMP binding"/>
    <property type="evidence" value="ECO:0007669"/>
    <property type="project" value="UniProtKB-KW"/>
</dbReference>
<dbReference type="GO" id="GO:0030553">
    <property type="term" value="F:cGMP binding"/>
    <property type="evidence" value="ECO:0007669"/>
    <property type="project" value="UniProtKB-KW"/>
</dbReference>
<dbReference type="GO" id="GO:0005249">
    <property type="term" value="F:voltage-gated potassium channel activity"/>
    <property type="evidence" value="ECO:0007669"/>
    <property type="project" value="InterPro"/>
</dbReference>
<dbReference type="GO" id="GO:0009617">
    <property type="term" value="P:response to bacterium"/>
    <property type="evidence" value="ECO:0000270"/>
    <property type="project" value="TAIR"/>
</dbReference>
<dbReference type="GO" id="GO:0051592">
    <property type="term" value="P:response to calcium ion"/>
    <property type="evidence" value="ECO:0000270"/>
    <property type="project" value="TAIR"/>
</dbReference>
<dbReference type="CDD" id="cd00038">
    <property type="entry name" value="CAP_ED"/>
    <property type="match status" value="1"/>
</dbReference>
<dbReference type="FunFam" id="1.10.287.630:FF:000003">
    <property type="entry name" value="Cyclic nucleotide-gated ion channel 1"/>
    <property type="match status" value="1"/>
</dbReference>
<dbReference type="FunFam" id="2.60.120.10:FF:000024">
    <property type="entry name" value="Cyclic nucleotide-gated ion channel 1"/>
    <property type="match status" value="1"/>
</dbReference>
<dbReference type="Gene3D" id="1.10.287.70">
    <property type="match status" value="1"/>
</dbReference>
<dbReference type="Gene3D" id="1.10.287.630">
    <property type="entry name" value="Helix hairpin bin"/>
    <property type="match status" value="1"/>
</dbReference>
<dbReference type="Gene3D" id="2.60.120.10">
    <property type="entry name" value="Jelly Rolls"/>
    <property type="match status" value="1"/>
</dbReference>
<dbReference type="InterPro" id="IPR000595">
    <property type="entry name" value="cNMP-bd_dom"/>
</dbReference>
<dbReference type="InterPro" id="IPR018490">
    <property type="entry name" value="cNMP-bd_dom_sf"/>
</dbReference>
<dbReference type="InterPro" id="IPR005821">
    <property type="entry name" value="Ion_trans_dom"/>
</dbReference>
<dbReference type="InterPro" id="IPR003938">
    <property type="entry name" value="K_chnl_volt-dep_EAG/ELK/ERG"/>
</dbReference>
<dbReference type="InterPro" id="IPR014710">
    <property type="entry name" value="RmlC-like_jellyroll"/>
</dbReference>
<dbReference type="PANTHER" id="PTHR45651:SF12">
    <property type="entry name" value="CYCLIC NUCLEOTIDE-GATED ION CHANNEL 15-RELATED"/>
    <property type="match status" value="1"/>
</dbReference>
<dbReference type="PANTHER" id="PTHR45651">
    <property type="entry name" value="CYCLIC NUCLEOTIDE-GATED ION CHANNEL 15-RELATED-RELATED"/>
    <property type="match status" value="1"/>
</dbReference>
<dbReference type="Pfam" id="PF00027">
    <property type="entry name" value="cNMP_binding"/>
    <property type="match status" value="1"/>
</dbReference>
<dbReference type="Pfam" id="PF00520">
    <property type="entry name" value="Ion_trans"/>
    <property type="match status" value="1"/>
</dbReference>
<dbReference type="PRINTS" id="PR01463">
    <property type="entry name" value="EAGCHANLFMLY"/>
</dbReference>
<dbReference type="SMART" id="SM00100">
    <property type="entry name" value="cNMP"/>
    <property type="match status" value="1"/>
</dbReference>
<dbReference type="SUPFAM" id="SSF51206">
    <property type="entry name" value="cAMP-binding domain-like"/>
    <property type="match status" value="1"/>
</dbReference>
<dbReference type="SUPFAM" id="SSF81324">
    <property type="entry name" value="Voltage-gated potassium channels"/>
    <property type="match status" value="1"/>
</dbReference>
<dbReference type="PROSITE" id="PS50042">
    <property type="entry name" value="CNMP_BINDING_3"/>
    <property type="match status" value="1"/>
</dbReference>
<dbReference type="PROSITE" id="PS50096">
    <property type="entry name" value="IQ"/>
    <property type="match status" value="1"/>
</dbReference>
<proteinExistence type="inferred from homology"/>
<gene>
    <name type="primary">CNGC15</name>
    <name type="ordered locus">At2g28260</name>
    <name type="ORF">T3B23.7</name>
</gene>
<evidence type="ECO:0000250" key="1"/>
<evidence type="ECO:0000255" key="2"/>
<evidence type="ECO:0000255" key="3">
    <source>
        <dbReference type="PROSITE-ProRule" id="PRU00116"/>
    </source>
</evidence>
<evidence type="ECO:0000256" key="4">
    <source>
        <dbReference type="SAM" id="MobiDB-lite"/>
    </source>
</evidence>
<evidence type="ECO:0000305" key="5"/>
<sequence>MGYGNSRSVRFQEDQEVVHGGESGVKLKFKINGTQINNVKMMSKGKFLKAKVLSRVFSEDLERVKTKILDPRGQTIRRWNKIFLIACLVSLFVDPLFFFLPVMRNEACITIGVRLEVVLTLIRSLADAFYIAQILIRFRTAYIAPPSRVFGRGELVIDSRKIAWRYLHKSFWIHLVAALPLPQVLIWIIIPNLRGSPMTNTKNVLRFIIIFQYVPRMFLIFPLSRQIIKATGVVTETAWAGAAYNLMLYMLASHVLGACWYLLAVERQEACWRHACNIEKQICQYRFFECRRLEDPQRNSWFEWSNITTICKPASKFYEFGIFGDAVTSTVTSSKFINKYFYCLWWGLKNLSSLGQNLATSTYAGEILFAIIIATLGLVLFALLIGNMQTYLQSTTMRLEEWRIRRTDTEQWMHHRQLPPELRQAVRKYDQYKWLATRGVDEEALLISLPLDLRRDIKRHLCFDLVRRVPLFDQMDERMLDAICERLKPALCTEGTFLVREGDPVNEMLFIIRGHLDSYTTNGGRTGFFNSCLIGPGDFCGEELLTWALDPRPVVILPSSTRTVKAICEVEAFALKAEDLQFVASQFRRLHTKQLRHKFRFYSHQWRTWAACFIQAAWRRHRKRKYKTELRAKEEFHYRFEAATARLAVNGGKYTRSGSDSGMMSSIQKPVEPDFSSE</sequence>
<comment type="function">
    <text>Putative cyclic nucleotide-gated ion channel.</text>
</comment>
<comment type="subunit">
    <text evidence="5">Homotetramer or heterotetramer.</text>
</comment>
<comment type="subcellular location">
    <subcellularLocation>
        <location evidence="5">Cell membrane</location>
        <topology evidence="5">Multi-pass membrane protein</topology>
    </subcellularLocation>
</comment>
<comment type="domain">
    <text evidence="1">The binding of calmodulin to the C-terminus might interfere with cyclic nucleotide binding and thus channel activation.</text>
</comment>
<comment type="similarity">
    <text evidence="5">Belongs to the cyclic nucleotide-gated cation channel (TC 1.A.1.5) family.</text>
</comment>
<accession>Q9SL29</accession>
<name>CNG15_ARATH</name>
<keyword id="KW-0112">Calmodulin-binding</keyword>
<keyword id="KW-0114">cAMP</keyword>
<keyword id="KW-0116">cAMP-binding</keyword>
<keyword id="KW-1003">Cell membrane</keyword>
<keyword id="KW-0140">cGMP</keyword>
<keyword id="KW-0142">cGMP-binding</keyword>
<keyword id="KW-0407">Ion channel</keyword>
<keyword id="KW-0406">Ion transport</keyword>
<keyword id="KW-1071">Ligand-gated ion channel</keyword>
<keyword id="KW-0472">Membrane</keyword>
<keyword id="KW-0547">Nucleotide-binding</keyword>
<keyword id="KW-1185">Reference proteome</keyword>
<keyword id="KW-0812">Transmembrane</keyword>
<keyword id="KW-1133">Transmembrane helix</keyword>
<keyword id="KW-0813">Transport</keyword>
<reference key="1">
    <citation type="journal article" date="1999" name="Nature">
        <title>Sequence and analysis of chromosome 2 of the plant Arabidopsis thaliana.</title>
        <authorList>
            <person name="Lin X."/>
            <person name="Kaul S."/>
            <person name="Rounsley S.D."/>
            <person name="Shea T.P."/>
            <person name="Benito M.-I."/>
            <person name="Town C.D."/>
            <person name="Fujii C.Y."/>
            <person name="Mason T.M."/>
            <person name="Bowman C.L."/>
            <person name="Barnstead M.E."/>
            <person name="Feldblyum T.V."/>
            <person name="Buell C.R."/>
            <person name="Ketchum K.A."/>
            <person name="Lee J.J."/>
            <person name="Ronning C.M."/>
            <person name="Koo H.L."/>
            <person name="Moffat K.S."/>
            <person name="Cronin L.A."/>
            <person name="Shen M."/>
            <person name="Pai G."/>
            <person name="Van Aken S."/>
            <person name="Umayam L."/>
            <person name="Tallon L.J."/>
            <person name="Gill J.E."/>
            <person name="Adams M.D."/>
            <person name="Carrera A.J."/>
            <person name="Creasy T.H."/>
            <person name="Goodman H.M."/>
            <person name="Somerville C.R."/>
            <person name="Copenhaver G.P."/>
            <person name="Preuss D."/>
            <person name="Nierman W.C."/>
            <person name="White O."/>
            <person name="Eisen J.A."/>
            <person name="Salzberg S.L."/>
            <person name="Fraser C.M."/>
            <person name="Venter J.C."/>
        </authorList>
    </citation>
    <scope>NUCLEOTIDE SEQUENCE [LARGE SCALE GENOMIC DNA]</scope>
    <source>
        <strain>cv. Columbia</strain>
    </source>
</reference>
<reference key="2">
    <citation type="journal article" date="2017" name="Plant J.">
        <title>Araport11: a complete reannotation of the Arabidopsis thaliana reference genome.</title>
        <authorList>
            <person name="Cheng C.Y."/>
            <person name="Krishnakumar V."/>
            <person name="Chan A.P."/>
            <person name="Thibaud-Nissen F."/>
            <person name="Schobel S."/>
            <person name="Town C.D."/>
        </authorList>
    </citation>
    <scope>GENOME REANNOTATION</scope>
    <source>
        <strain>cv. Columbia</strain>
    </source>
</reference>
<reference key="3">
    <citation type="journal article" date="2001" name="Plant Physiol.">
        <title>Phylogenetic relationships within cation transporter families of Arabidopsis.</title>
        <authorList>
            <person name="Maeser P."/>
            <person name="Thomine S."/>
            <person name="Schroeder J.I."/>
            <person name="Ward J.M."/>
            <person name="Hirschi K."/>
            <person name="Sze H."/>
            <person name="Talke I.N."/>
            <person name="Amtmann A."/>
            <person name="Maathuis F.J.M."/>
            <person name="Sanders D."/>
            <person name="Harper J.F."/>
            <person name="Tchieu J."/>
            <person name="Gribskov M."/>
            <person name="Persans M.W."/>
            <person name="Salt D.E."/>
            <person name="Kim S.A."/>
            <person name="Guerinot M.L."/>
        </authorList>
    </citation>
    <scope>GENE FAMILY</scope>
    <scope>NOMENCLATURE</scope>
</reference>